<comment type="function">
    <text evidence="1">Responsible for the transport of dicarboxylates such as succinate, fumarate, and malate from the periplasm across the membrane.</text>
</comment>
<comment type="subcellular location">
    <subcellularLocation>
        <location evidence="1">Cell inner membrane</location>
        <topology evidence="1">Multi-pass membrane protein</topology>
    </subcellularLocation>
</comment>
<comment type="similarity">
    <text evidence="1">Belongs to the dicarboxylate/amino acid:cation symporter (DAACS) (TC 2.A.23) family.</text>
</comment>
<reference key="1">
    <citation type="journal article" date="2001" name="Nature">
        <title>Genome sequence of Yersinia pestis, the causative agent of plague.</title>
        <authorList>
            <person name="Parkhill J."/>
            <person name="Wren B.W."/>
            <person name="Thomson N.R."/>
            <person name="Titball R.W."/>
            <person name="Holden M.T.G."/>
            <person name="Prentice M.B."/>
            <person name="Sebaihia M."/>
            <person name="James K.D."/>
            <person name="Churcher C.M."/>
            <person name="Mungall K.L."/>
            <person name="Baker S."/>
            <person name="Basham D."/>
            <person name="Bentley S.D."/>
            <person name="Brooks K."/>
            <person name="Cerdeno-Tarraga A.-M."/>
            <person name="Chillingworth T."/>
            <person name="Cronin A."/>
            <person name="Davies R.M."/>
            <person name="Davis P."/>
            <person name="Dougan G."/>
            <person name="Feltwell T."/>
            <person name="Hamlin N."/>
            <person name="Holroyd S."/>
            <person name="Jagels K."/>
            <person name="Karlyshev A.V."/>
            <person name="Leather S."/>
            <person name="Moule S."/>
            <person name="Oyston P.C.F."/>
            <person name="Quail M.A."/>
            <person name="Rutherford K.M."/>
            <person name="Simmonds M."/>
            <person name="Skelton J."/>
            <person name="Stevens K."/>
            <person name="Whitehead S."/>
            <person name="Barrell B.G."/>
        </authorList>
    </citation>
    <scope>NUCLEOTIDE SEQUENCE [LARGE SCALE GENOMIC DNA]</scope>
    <source>
        <strain>CO-92 / Biovar Orientalis</strain>
    </source>
</reference>
<reference key="2">
    <citation type="journal article" date="2002" name="J. Bacteriol.">
        <title>Genome sequence of Yersinia pestis KIM.</title>
        <authorList>
            <person name="Deng W."/>
            <person name="Burland V."/>
            <person name="Plunkett G. III"/>
            <person name="Boutin A."/>
            <person name="Mayhew G.F."/>
            <person name="Liss P."/>
            <person name="Perna N.T."/>
            <person name="Rose D.J."/>
            <person name="Mau B."/>
            <person name="Zhou S."/>
            <person name="Schwartz D.C."/>
            <person name="Fetherston J.D."/>
            <person name="Lindler L.E."/>
            <person name="Brubaker R.R."/>
            <person name="Plano G.V."/>
            <person name="Straley S.C."/>
            <person name="McDonough K.A."/>
            <person name="Nilles M.L."/>
            <person name="Matson J.S."/>
            <person name="Blattner F.R."/>
            <person name="Perry R.D."/>
        </authorList>
    </citation>
    <scope>NUCLEOTIDE SEQUENCE [LARGE SCALE GENOMIC DNA]</scope>
    <source>
        <strain>KIM10+ / Biovar Mediaevalis</strain>
    </source>
</reference>
<reference key="3">
    <citation type="journal article" date="2004" name="DNA Res.">
        <title>Complete genome sequence of Yersinia pestis strain 91001, an isolate avirulent to humans.</title>
        <authorList>
            <person name="Song Y."/>
            <person name="Tong Z."/>
            <person name="Wang J."/>
            <person name="Wang L."/>
            <person name="Guo Z."/>
            <person name="Han Y."/>
            <person name="Zhang J."/>
            <person name="Pei D."/>
            <person name="Zhou D."/>
            <person name="Qin H."/>
            <person name="Pang X."/>
            <person name="Han Y."/>
            <person name="Zhai J."/>
            <person name="Li M."/>
            <person name="Cui B."/>
            <person name="Qi Z."/>
            <person name="Jin L."/>
            <person name="Dai R."/>
            <person name="Chen F."/>
            <person name="Li S."/>
            <person name="Ye C."/>
            <person name="Du Z."/>
            <person name="Lin W."/>
            <person name="Wang J."/>
            <person name="Yu J."/>
            <person name="Yang H."/>
            <person name="Wang J."/>
            <person name="Huang P."/>
            <person name="Yang R."/>
        </authorList>
    </citation>
    <scope>NUCLEOTIDE SEQUENCE [LARGE SCALE GENOMIC DNA]</scope>
    <source>
        <strain>91001 / Biovar Mediaevalis</strain>
    </source>
</reference>
<keyword id="KW-0997">Cell inner membrane</keyword>
<keyword id="KW-1003">Cell membrane</keyword>
<keyword id="KW-0472">Membrane</keyword>
<keyword id="KW-1185">Reference proteome</keyword>
<keyword id="KW-0769">Symport</keyword>
<keyword id="KW-0812">Transmembrane</keyword>
<keyword id="KW-1133">Transmembrane helix</keyword>
<keyword id="KW-0813">Transport</keyword>
<proteinExistence type="inferred from homology"/>
<name>DCTA_YERPE</name>
<feature type="chain" id="PRO_0000202117" description="C4-dicarboxylate transport protein">
    <location>
        <begin position="1"/>
        <end position="429"/>
    </location>
</feature>
<feature type="transmembrane region" description="Helical" evidence="1">
    <location>
        <begin position="5"/>
        <end position="27"/>
    </location>
</feature>
<feature type="transmembrane region" description="Helical" evidence="1">
    <location>
        <begin position="47"/>
        <end position="64"/>
    </location>
</feature>
<feature type="transmembrane region" description="Helical" evidence="1">
    <location>
        <begin position="77"/>
        <end position="99"/>
    </location>
</feature>
<feature type="transmembrane region" description="Helical" evidence="1">
    <location>
        <begin position="141"/>
        <end position="163"/>
    </location>
</feature>
<feature type="transmembrane region" description="Helical" evidence="1">
    <location>
        <begin position="184"/>
        <end position="206"/>
    </location>
</feature>
<feature type="transmembrane region" description="Helical" evidence="1">
    <location>
        <begin position="216"/>
        <end position="238"/>
    </location>
</feature>
<feature type="transmembrane region" description="Helical" evidence="1">
    <location>
        <begin position="330"/>
        <end position="347"/>
    </location>
</feature>
<feature type="transmembrane region" description="Helical" evidence="1">
    <location>
        <begin position="351"/>
        <end position="373"/>
    </location>
</feature>
<organism>
    <name type="scientific">Yersinia pestis</name>
    <dbReference type="NCBI Taxonomy" id="632"/>
    <lineage>
        <taxon>Bacteria</taxon>
        <taxon>Pseudomonadati</taxon>
        <taxon>Pseudomonadota</taxon>
        <taxon>Gammaproteobacteria</taxon>
        <taxon>Enterobacterales</taxon>
        <taxon>Yersiniaceae</taxon>
        <taxon>Yersinia</taxon>
    </lineage>
</organism>
<accession>Q8ZA28</accession>
<accession>Q0WA26</accession>
<sequence length="429" mass="45498">MKVSIFKTLYFQVLTAITIGVLLGHFYPEIGAQMKPLGDGFVKLIKMIIAPVIFCTVVTGIAGMESMKAVGRTGAIALLYFEIVSTLALLIGLVVVNVAQPGVGMNIDPATLDAKAVALYAEQASQQGIIPFLLDIIPGSVVGAFASGNILQVLLFAVLFGFALHRLGEKGQLIFNVIESFSRVIFGVINMIMRLAPLGAFGAMAFTIGKYGVGSLVQLGQLILCFYLTCILFVVLVLGTIAKFNGFNIFKFIRYIKEELLIVLGTSSSESVLPRMLDKMENAGCKKSVVGLVIPTGYSFNLDGTSIYLTMAAVFIAQATNTHMDIMHQVTLLVVLLLSSKGAAGVTGSGFIVLAATISAVGHLPLAGLALILGIDRFMSEARALTNLVGNGVATIVVAKWCKQLDNDQLQAVLSNKVLPNVKSSVSVS</sequence>
<dbReference type="EMBL" id="AL590842">
    <property type="protein sequence ID" value="CAL22572.1"/>
    <property type="molecule type" value="Genomic_DNA"/>
</dbReference>
<dbReference type="EMBL" id="AE009952">
    <property type="protein sequence ID" value="AAM87381.1"/>
    <property type="molecule type" value="Genomic_DNA"/>
</dbReference>
<dbReference type="EMBL" id="AE017042">
    <property type="protein sequence ID" value="AAS63520.1"/>
    <property type="molecule type" value="Genomic_DNA"/>
</dbReference>
<dbReference type="PIR" id="AI0485">
    <property type="entry name" value="AI0485"/>
</dbReference>
<dbReference type="RefSeq" id="WP_002209553.1">
    <property type="nucleotide sequence ID" value="NZ_WUCM01000026.1"/>
</dbReference>
<dbReference type="RefSeq" id="YP_002348862.1">
    <property type="nucleotide sequence ID" value="NC_003143.1"/>
</dbReference>
<dbReference type="SMR" id="Q8ZA28"/>
<dbReference type="IntAct" id="Q8ZA28">
    <property type="interactions" value="2"/>
</dbReference>
<dbReference type="STRING" id="214092.YPO3992"/>
<dbReference type="PaxDb" id="214092-YPO3992"/>
<dbReference type="DNASU" id="1148783"/>
<dbReference type="EnsemblBacteria" id="AAS63520">
    <property type="protein sequence ID" value="AAS63520"/>
    <property type="gene ID" value="YP_3355"/>
</dbReference>
<dbReference type="KEGG" id="ype:YPO3992"/>
<dbReference type="KEGG" id="ypk:y3836"/>
<dbReference type="KEGG" id="ypm:YP_3355"/>
<dbReference type="PATRIC" id="fig|214092.21.peg.4526"/>
<dbReference type="eggNOG" id="COG1301">
    <property type="taxonomic scope" value="Bacteria"/>
</dbReference>
<dbReference type="HOGENOM" id="CLU_019375_7_0_6"/>
<dbReference type="OMA" id="TWTKEID"/>
<dbReference type="OrthoDB" id="9766690at2"/>
<dbReference type="Proteomes" id="UP000000815">
    <property type="component" value="Chromosome"/>
</dbReference>
<dbReference type="Proteomes" id="UP000001019">
    <property type="component" value="Chromosome"/>
</dbReference>
<dbReference type="Proteomes" id="UP000002490">
    <property type="component" value="Chromosome"/>
</dbReference>
<dbReference type="GO" id="GO:0005886">
    <property type="term" value="C:plasma membrane"/>
    <property type="evidence" value="ECO:0000318"/>
    <property type="project" value="GO_Central"/>
</dbReference>
<dbReference type="GO" id="GO:0015138">
    <property type="term" value="F:fumarate transmembrane transporter activity"/>
    <property type="evidence" value="ECO:0000318"/>
    <property type="project" value="GO_Central"/>
</dbReference>
<dbReference type="GO" id="GO:0015366">
    <property type="term" value="F:malate:proton symporter activity"/>
    <property type="evidence" value="ECO:0000318"/>
    <property type="project" value="GO_Central"/>
</dbReference>
<dbReference type="GO" id="GO:0015141">
    <property type="term" value="F:succinate transmembrane transporter activity"/>
    <property type="evidence" value="ECO:0000318"/>
    <property type="project" value="GO_Central"/>
</dbReference>
<dbReference type="GO" id="GO:0070778">
    <property type="term" value="P:L-aspartate transmembrane transport"/>
    <property type="evidence" value="ECO:0000318"/>
    <property type="project" value="GO_Central"/>
</dbReference>
<dbReference type="FunFam" id="1.10.3860.10:FF:000001">
    <property type="entry name" value="C4-dicarboxylate transport protein"/>
    <property type="match status" value="1"/>
</dbReference>
<dbReference type="Gene3D" id="1.10.3860.10">
    <property type="entry name" value="Sodium:dicarboxylate symporter"/>
    <property type="match status" value="1"/>
</dbReference>
<dbReference type="HAMAP" id="MF_01300">
    <property type="entry name" value="C4_dicarb_transport"/>
    <property type="match status" value="1"/>
</dbReference>
<dbReference type="InterPro" id="IPR023954">
    <property type="entry name" value="C4_dicarb_transport"/>
</dbReference>
<dbReference type="InterPro" id="IPR001991">
    <property type="entry name" value="Na-dicarboxylate_symporter"/>
</dbReference>
<dbReference type="InterPro" id="IPR018107">
    <property type="entry name" value="Na-dicarboxylate_symporter_CS"/>
</dbReference>
<dbReference type="InterPro" id="IPR036458">
    <property type="entry name" value="Na:dicarbo_symporter_sf"/>
</dbReference>
<dbReference type="NCBIfam" id="NF002461">
    <property type="entry name" value="PRK01663.1"/>
    <property type="match status" value="1"/>
</dbReference>
<dbReference type="NCBIfam" id="NF009587">
    <property type="entry name" value="PRK13027.1"/>
    <property type="match status" value="1"/>
</dbReference>
<dbReference type="PANTHER" id="PTHR42865:SF1">
    <property type="entry name" value="AEROBIC C4-DICARBOXYLATE TRANSPORT PROTEIN"/>
    <property type="match status" value="1"/>
</dbReference>
<dbReference type="PANTHER" id="PTHR42865">
    <property type="entry name" value="PROTON/GLUTAMATE-ASPARTATE SYMPORTER"/>
    <property type="match status" value="1"/>
</dbReference>
<dbReference type="Pfam" id="PF00375">
    <property type="entry name" value="SDF"/>
    <property type="match status" value="1"/>
</dbReference>
<dbReference type="PRINTS" id="PR00173">
    <property type="entry name" value="EDTRNSPORT"/>
</dbReference>
<dbReference type="SUPFAM" id="SSF118215">
    <property type="entry name" value="Proton glutamate symport protein"/>
    <property type="match status" value="1"/>
</dbReference>
<dbReference type="PROSITE" id="PS00713">
    <property type="entry name" value="NA_DICARBOXYL_SYMP_1"/>
    <property type="match status" value="1"/>
</dbReference>
<dbReference type="PROSITE" id="PS00714">
    <property type="entry name" value="NA_DICARBOXYL_SYMP_2"/>
    <property type="match status" value="1"/>
</dbReference>
<evidence type="ECO:0000255" key="1">
    <source>
        <dbReference type="HAMAP-Rule" id="MF_01300"/>
    </source>
</evidence>
<protein>
    <recommendedName>
        <fullName evidence="1">C4-dicarboxylate transport protein</fullName>
    </recommendedName>
</protein>
<gene>
    <name evidence="1" type="primary">dctA</name>
    <name type="ordered locus">YPO3992</name>
    <name type="ordered locus">y3836</name>
    <name type="ordered locus">YP_3355</name>
</gene>